<organism>
    <name type="scientific">Mycobacterium leprae (strain TN)</name>
    <dbReference type="NCBI Taxonomy" id="272631"/>
    <lineage>
        <taxon>Bacteria</taxon>
        <taxon>Bacillati</taxon>
        <taxon>Actinomycetota</taxon>
        <taxon>Actinomycetes</taxon>
        <taxon>Mycobacteriales</taxon>
        <taxon>Mycobacteriaceae</taxon>
        <taxon>Mycobacterium</taxon>
    </lineage>
</organism>
<sequence length="198" mass="21851">MVTDGPAALAEFDRSGADIVLLDLMLPGMSGTDVYKQLRVRSSVPVIMVTARDSEIDKVVGLELGADDYVTKPYSARELIARIRAVLRRGGDDDSEISDGVLESGPLRMDVERHVVSVNGYAITLPLKEFDLLEYLMRNSGRVLTRGQLIDRVWGVDYVGDTKTLDVHVKRLRSKIEADPANPVHLVTVRGLGYKLES</sequence>
<accession>P54884</accession>
<gene>
    <name type="primary">rgx3</name>
    <name type="ordered locus">ML2439</name>
    <name type="ORF">B2168_C3_248</name>
</gene>
<name>REGX3_MYCLE</name>
<proteinExistence type="inferred from homology"/>
<reference key="1">
    <citation type="submission" date="1994-03" db="EMBL/GenBank/DDBJ databases">
        <authorList>
            <person name="Smith D.R."/>
            <person name="Robison K."/>
        </authorList>
    </citation>
    <scope>NUCLEOTIDE SEQUENCE [GENOMIC DNA]</scope>
</reference>
<reference key="2">
    <citation type="journal article" date="2001" name="Nature">
        <title>Massive gene decay in the leprosy bacillus.</title>
        <authorList>
            <person name="Cole S.T."/>
            <person name="Eiglmeier K."/>
            <person name="Parkhill J."/>
            <person name="James K.D."/>
            <person name="Thomson N.R."/>
            <person name="Wheeler P.R."/>
            <person name="Honore N."/>
            <person name="Garnier T."/>
            <person name="Churcher C.M."/>
            <person name="Harris D.E."/>
            <person name="Mungall K.L."/>
            <person name="Basham D."/>
            <person name="Brown D."/>
            <person name="Chillingworth T."/>
            <person name="Connor R."/>
            <person name="Davies R.M."/>
            <person name="Devlin K."/>
            <person name="Duthoy S."/>
            <person name="Feltwell T."/>
            <person name="Fraser A."/>
            <person name="Hamlin N."/>
            <person name="Holroyd S."/>
            <person name="Hornsby T."/>
            <person name="Jagels K."/>
            <person name="Lacroix C."/>
            <person name="Maclean J."/>
            <person name="Moule S."/>
            <person name="Murphy L.D."/>
            <person name="Oliver K."/>
            <person name="Quail M.A."/>
            <person name="Rajandream M.A."/>
            <person name="Rutherford K.M."/>
            <person name="Rutter S."/>
            <person name="Seeger K."/>
            <person name="Simon S."/>
            <person name="Simmonds M."/>
            <person name="Skelton J."/>
            <person name="Squares R."/>
            <person name="Squares S."/>
            <person name="Stevens K."/>
            <person name="Taylor K."/>
            <person name="Whitehead S."/>
            <person name="Woodward J.R."/>
            <person name="Barrell B.G."/>
        </authorList>
    </citation>
    <scope>NUCLEOTIDE SEQUENCE [LARGE SCALE GENOMIC DNA]</scope>
    <source>
        <strain>TN</strain>
    </source>
</reference>
<comment type="function">
    <text evidence="1">Member of the two-component regulatory system SenX3/RegX3.</text>
</comment>
<comment type="PTM">
    <text evidence="1">Phosphorylated by SenX3.</text>
</comment>
<comment type="caution">
    <text evidence="4">To obtain a protein of the same size as its counterpart in other Mycobacteria, it would be necessary to introduce a frameshift. As both independent DNA sequences are identical, this seems to be a natural frameshift and the M.leprae sequence is therefore N-terminally truncated by about 30 residues.</text>
</comment>
<keyword id="KW-0238">DNA-binding</keyword>
<keyword id="KW-0597">Phosphoprotein</keyword>
<keyword id="KW-1185">Reference proteome</keyword>
<keyword id="KW-0804">Transcription</keyword>
<keyword id="KW-0805">Transcription regulation</keyword>
<keyword id="KW-0902">Two-component regulatory system</keyword>
<dbReference type="EMBL" id="U00018">
    <property type="protein sequence ID" value="AAA17242.1"/>
    <property type="molecule type" value="Genomic_DNA"/>
</dbReference>
<dbReference type="EMBL" id="AL583925">
    <property type="protein sequence ID" value="CAC31956.1"/>
    <property type="molecule type" value="Genomic_DNA"/>
</dbReference>
<dbReference type="PIR" id="S72906">
    <property type="entry name" value="S72906"/>
</dbReference>
<dbReference type="RefSeq" id="NP_302580.1">
    <property type="nucleotide sequence ID" value="NC_002677.1"/>
</dbReference>
<dbReference type="SMR" id="P54884"/>
<dbReference type="STRING" id="272631.gene:17576302"/>
<dbReference type="KEGG" id="mle:ML2439"/>
<dbReference type="PATRIC" id="fig|272631.5.peg.4686"/>
<dbReference type="Leproma" id="ML2439"/>
<dbReference type="eggNOG" id="COG0745">
    <property type="taxonomic scope" value="Bacteria"/>
</dbReference>
<dbReference type="HOGENOM" id="CLU_000445_30_4_11"/>
<dbReference type="OrthoDB" id="9790442at2"/>
<dbReference type="Proteomes" id="UP000000806">
    <property type="component" value="Chromosome"/>
</dbReference>
<dbReference type="GO" id="GO:0005829">
    <property type="term" value="C:cytosol"/>
    <property type="evidence" value="ECO:0007669"/>
    <property type="project" value="TreeGrafter"/>
</dbReference>
<dbReference type="GO" id="GO:0032993">
    <property type="term" value="C:protein-DNA complex"/>
    <property type="evidence" value="ECO:0007669"/>
    <property type="project" value="TreeGrafter"/>
</dbReference>
<dbReference type="GO" id="GO:0000156">
    <property type="term" value="F:phosphorelay response regulator activity"/>
    <property type="evidence" value="ECO:0007669"/>
    <property type="project" value="TreeGrafter"/>
</dbReference>
<dbReference type="GO" id="GO:0000976">
    <property type="term" value="F:transcription cis-regulatory region binding"/>
    <property type="evidence" value="ECO:0007669"/>
    <property type="project" value="TreeGrafter"/>
</dbReference>
<dbReference type="GO" id="GO:0006355">
    <property type="term" value="P:regulation of DNA-templated transcription"/>
    <property type="evidence" value="ECO:0007669"/>
    <property type="project" value="InterPro"/>
</dbReference>
<dbReference type="CDD" id="cd00383">
    <property type="entry name" value="trans_reg_C"/>
    <property type="match status" value="1"/>
</dbReference>
<dbReference type="FunFam" id="1.10.10.10:FF:000110">
    <property type="entry name" value="DNA-binding response regulator RegX3"/>
    <property type="match status" value="1"/>
</dbReference>
<dbReference type="Gene3D" id="3.40.50.2300">
    <property type="match status" value="1"/>
</dbReference>
<dbReference type="Gene3D" id="6.10.250.690">
    <property type="match status" value="1"/>
</dbReference>
<dbReference type="Gene3D" id="1.10.10.10">
    <property type="entry name" value="Winged helix-like DNA-binding domain superfamily/Winged helix DNA-binding domain"/>
    <property type="match status" value="1"/>
</dbReference>
<dbReference type="InterPro" id="IPR011006">
    <property type="entry name" value="CheY-like_superfamily"/>
</dbReference>
<dbReference type="InterPro" id="IPR001867">
    <property type="entry name" value="OmpR/PhoB-type_DNA-bd"/>
</dbReference>
<dbReference type="InterPro" id="IPR016032">
    <property type="entry name" value="Sig_transdc_resp-reg_C-effctor"/>
</dbReference>
<dbReference type="InterPro" id="IPR001789">
    <property type="entry name" value="Sig_transdc_resp-reg_receiver"/>
</dbReference>
<dbReference type="InterPro" id="IPR039420">
    <property type="entry name" value="WalR-like"/>
</dbReference>
<dbReference type="InterPro" id="IPR036388">
    <property type="entry name" value="WH-like_DNA-bd_sf"/>
</dbReference>
<dbReference type="PANTHER" id="PTHR48111">
    <property type="entry name" value="REGULATOR OF RPOS"/>
    <property type="match status" value="1"/>
</dbReference>
<dbReference type="PANTHER" id="PTHR48111:SF72">
    <property type="entry name" value="SENSORY TRANSDUCTION PROTEIN REGX3"/>
    <property type="match status" value="1"/>
</dbReference>
<dbReference type="Pfam" id="PF00072">
    <property type="entry name" value="Response_reg"/>
    <property type="match status" value="1"/>
</dbReference>
<dbReference type="Pfam" id="PF00486">
    <property type="entry name" value="Trans_reg_C"/>
    <property type="match status" value="1"/>
</dbReference>
<dbReference type="SMART" id="SM00448">
    <property type="entry name" value="REC"/>
    <property type="match status" value="1"/>
</dbReference>
<dbReference type="SMART" id="SM00862">
    <property type="entry name" value="Trans_reg_C"/>
    <property type="match status" value="1"/>
</dbReference>
<dbReference type="SUPFAM" id="SSF46894">
    <property type="entry name" value="C-terminal effector domain of the bipartite response regulators"/>
    <property type="match status" value="1"/>
</dbReference>
<dbReference type="SUPFAM" id="SSF52172">
    <property type="entry name" value="CheY-like"/>
    <property type="match status" value="1"/>
</dbReference>
<dbReference type="PROSITE" id="PS51755">
    <property type="entry name" value="OMPR_PHOB"/>
    <property type="match status" value="1"/>
</dbReference>
<dbReference type="PROSITE" id="PS50110">
    <property type="entry name" value="RESPONSE_REGULATORY"/>
    <property type="match status" value="1"/>
</dbReference>
<evidence type="ECO:0000250" key="1">
    <source>
        <dbReference type="UniProtKB" id="O07130"/>
    </source>
</evidence>
<evidence type="ECO:0000255" key="2">
    <source>
        <dbReference type="PROSITE-ProRule" id="PRU00169"/>
    </source>
</evidence>
<evidence type="ECO:0000255" key="3">
    <source>
        <dbReference type="PROSITE-ProRule" id="PRU01091"/>
    </source>
</evidence>
<evidence type="ECO:0000305" key="4"/>
<protein>
    <recommendedName>
        <fullName evidence="4">Sensory transduction protein RegX3</fullName>
    </recommendedName>
</protein>
<feature type="chain" id="PRO_0000081332" description="Sensory transduction protein RegX3">
    <location>
        <begin position="1"/>
        <end position="198"/>
    </location>
</feature>
<feature type="domain" description="Response regulatory" evidence="2">
    <location>
        <begin position="1"/>
        <end position="87"/>
    </location>
</feature>
<feature type="DNA-binding region" description="OmpR/PhoB-type" evidence="3">
    <location>
        <begin position="99"/>
        <end position="198"/>
    </location>
</feature>
<feature type="modified residue" description="4-aspartylphosphate" evidence="2">
    <location>
        <position position="23"/>
    </location>
</feature>